<dbReference type="EMBL" id="X00412">
    <property type="protein sequence ID" value="CAA25118.1"/>
    <property type="molecule type" value="mRNA"/>
</dbReference>
<dbReference type="PIR" id="A02111">
    <property type="entry name" value="QRRBG"/>
</dbReference>
<dbReference type="RefSeq" id="NP_001164516.1">
    <property type="nucleotide sequence ID" value="NM_001171045.1"/>
</dbReference>
<dbReference type="SMR" id="P01832"/>
<dbReference type="FunCoup" id="P01832">
    <property type="interactions" value="32"/>
</dbReference>
<dbReference type="STRING" id="9986.ENSOCUP00000012314"/>
<dbReference type="GlyCosmos" id="P01832">
    <property type="glycosylation" value="3 sites, No reported glycans"/>
</dbReference>
<dbReference type="iPTMnet" id="P01832"/>
<dbReference type="PaxDb" id="9986-ENSOCUP00000012314"/>
<dbReference type="GeneID" id="100328593"/>
<dbReference type="KEGG" id="ocu:100328593"/>
<dbReference type="CTD" id="5284"/>
<dbReference type="eggNOG" id="ENOG502QPKT">
    <property type="taxonomic scope" value="Eukaryota"/>
</dbReference>
<dbReference type="InParanoid" id="P01832"/>
<dbReference type="OrthoDB" id="6157407at2759"/>
<dbReference type="Proteomes" id="UP000001811">
    <property type="component" value="Unplaced"/>
</dbReference>
<dbReference type="GO" id="GO:0005886">
    <property type="term" value="C:plasma membrane"/>
    <property type="evidence" value="ECO:0000250"/>
    <property type="project" value="UniProtKB"/>
</dbReference>
<dbReference type="GO" id="GO:0071751">
    <property type="term" value="C:secretory IgA immunoglobulin complex"/>
    <property type="evidence" value="ECO:0000250"/>
    <property type="project" value="UniProtKB"/>
</dbReference>
<dbReference type="GO" id="GO:0004888">
    <property type="term" value="F:transmembrane signaling receptor activity"/>
    <property type="evidence" value="ECO:0007669"/>
    <property type="project" value="TreeGrafter"/>
</dbReference>
<dbReference type="GO" id="GO:0002415">
    <property type="term" value="P:immunoglobulin transcytosis in epithelial cells mediated by polymeric immunoglobulin receptor"/>
    <property type="evidence" value="ECO:0000314"/>
    <property type="project" value="UniProtKB"/>
</dbReference>
<dbReference type="CDD" id="cd05716">
    <property type="entry name" value="IgV_pIgR_like"/>
    <property type="match status" value="3"/>
</dbReference>
<dbReference type="Gene3D" id="2.60.40.10">
    <property type="entry name" value="Immunoglobulins"/>
    <property type="match status" value="5"/>
</dbReference>
<dbReference type="InterPro" id="IPR050671">
    <property type="entry name" value="CD300_family_receptors"/>
</dbReference>
<dbReference type="InterPro" id="IPR007110">
    <property type="entry name" value="Ig-like_dom"/>
</dbReference>
<dbReference type="InterPro" id="IPR036179">
    <property type="entry name" value="Ig-like_dom_sf"/>
</dbReference>
<dbReference type="InterPro" id="IPR013783">
    <property type="entry name" value="Ig-like_fold"/>
</dbReference>
<dbReference type="InterPro" id="IPR003599">
    <property type="entry name" value="Ig_sub"/>
</dbReference>
<dbReference type="InterPro" id="IPR013106">
    <property type="entry name" value="Ig_V-set"/>
</dbReference>
<dbReference type="PANTHER" id="PTHR11860:SF82">
    <property type="entry name" value="POLYMERIC IMMUNOGLOBULIN RECEPTOR"/>
    <property type="match status" value="1"/>
</dbReference>
<dbReference type="PANTHER" id="PTHR11860">
    <property type="entry name" value="POLYMERIC-IMMUNOGLOBULIN RECEPTOR"/>
    <property type="match status" value="1"/>
</dbReference>
<dbReference type="Pfam" id="PF07686">
    <property type="entry name" value="V-set"/>
    <property type="match status" value="4"/>
</dbReference>
<dbReference type="SMART" id="SM00409">
    <property type="entry name" value="IG"/>
    <property type="match status" value="5"/>
</dbReference>
<dbReference type="SMART" id="SM00406">
    <property type="entry name" value="IGv"/>
    <property type="match status" value="4"/>
</dbReference>
<dbReference type="SUPFAM" id="SSF48726">
    <property type="entry name" value="Immunoglobulin"/>
    <property type="match status" value="5"/>
</dbReference>
<dbReference type="PROSITE" id="PS50835">
    <property type="entry name" value="IG_LIKE"/>
    <property type="match status" value="3"/>
</dbReference>
<reference key="1">
    <citation type="journal article" date="1984" name="Nature">
        <title>The receptor for transepithelial transport of IgA and IgM contains multiple immunoglobulin-like domains.</title>
        <authorList>
            <person name="Mostov K.E."/>
            <person name="Friedlander M."/>
            <person name="Blobel G."/>
        </authorList>
    </citation>
    <scope>NUCLEOTIDE SEQUENCE [MRNA]</scope>
</reference>
<reference key="2">
    <citation type="journal article" date="1988" name="J. Biol. Chem.">
        <title>Rabbit secretory components of different allotypes vary in their carbohydrate content and their sites of N-linked glycosylation.</title>
        <authorList>
            <person name="Frutiger S."/>
            <person name="Hughes G.J."/>
            <person name="Hanly W.C."/>
            <person name="Jaton J.-C."/>
        </authorList>
    </citation>
    <scope>PROTEIN SEQUENCE OF 87-114 AND 410-428</scope>
    <scope>GLYCOSYLATION AT ASN-88 (VARIANT ASN-88)</scope>
    <scope>GLYCOSYLATION AT ASN-108 AND ASN-418</scope>
    <scope>VARIANTS</scope>
    <scope>POLYMORPHISM</scope>
</reference>
<gene>
    <name type="primary">PIGR</name>
</gene>
<name>PIGR_RABIT</name>
<sequence length="773" mass="83887">MALFLLTCLLAVFSAATAQSSLLGPSSIFGPGEVNVLEGDSVSITCYYPTTSVTRHSRKFWCREEESGRCVTLASTGYTSQEYSGRGKLTDFPDKGEFVVTVDQLTQNDSGSYKCGVGVNGRGLDFGVNVLVSQKPEPDDVVYKQYESYTVTITCPFTYATRQLKKSFYKVEDGELVLIIDSSSKEAKDPRYKGRITLQIQSTTAKEFTVTIKHLQLNDAGQYVCQSGSDPTAEEQNVDLRLLTPGLLYGNLGGSVTFECALDSEDANAVASLRQVRGGNVVIDSQGTIDPAFEGRILFTKAENGHFSVVIAGLRKEDTGNYLCGVQSNGQSGDGPTQLRQLFVNEEIDVSRSPPVLKGFPGGSVTIRCPYNPKRSDSHLQLYLWEGSQTRHLLVDSGEGLVQKDYTGRLALFEEPGNGTFSVVLNQLTAEDEGFYWCVSDDDESLTTSVKLQIVDGEPSPTIDKFTAVQGEPVEITCHFPCKYFSSEKYWCKWNDHGCEDLPTKLSSSGDLVKCNNNLVLTLTLDSVSEDDEGWYWCGAKDGHEFEEVAAVRVELTEPAKVAVEPAKVPVDPAKAAPAPAEEKAKARCPVPRRRQWYPLSRKLRTSCPEPRLLAEEVAVQSAEDPASGSRASVDASSASGQSGSAKVLISTLVPLGLVLAAGAMAVAIARARHRRNVDRVSIGSYRTDISMSDLENSREFGAIDNPSACPDARETALGGKDELATATESTVEIEEPKKAKRSSKEEADLAYSAFLLQSNTIAAEHQDGPKEA</sequence>
<protein>
    <recommendedName>
        <fullName>Polymeric immunoglobulin receptor</fullName>
        <shortName>PIgR</shortName>
        <shortName>Poly-Ig receptor</shortName>
    </recommendedName>
    <component>
        <recommendedName>
            <fullName>Secretory component</fullName>
        </recommendedName>
    </component>
</protein>
<evidence type="ECO:0000250" key="1">
    <source>
        <dbReference type="UniProtKB" id="O70570"/>
    </source>
</evidence>
<evidence type="ECO:0000250" key="2">
    <source>
        <dbReference type="UniProtKB" id="P01833"/>
    </source>
</evidence>
<evidence type="ECO:0000250" key="3">
    <source>
        <dbReference type="UniProtKB" id="P15083"/>
    </source>
</evidence>
<evidence type="ECO:0000255" key="4"/>
<evidence type="ECO:0000255" key="5">
    <source>
        <dbReference type="PROSITE-ProRule" id="PRU00114"/>
    </source>
</evidence>
<evidence type="ECO:0000256" key="6">
    <source>
        <dbReference type="SAM" id="MobiDB-lite"/>
    </source>
</evidence>
<evidence type="ECO:0000269" key="7">
    <source>
    </source>
</evidence>
<keyword id="KW-1003">Cell membrane</keyword>
<keyword id="KW-0903">Direct protein sequencing</keyword>
<keyword id="KW-1015">Disulfide bond</keyword>
<keyword id="KW-0325">Glycoprotein</keyword>
<keyword id="KW-0393">Immunoglobulin domain</keyword>
<keyword id="KW-0472">Membrane</keyword>
<keyword id="KW-0597">Phosphoprotein</keyword>
<keyword id="KW-1185">Reference proteome</keyword>
<keyword id="KW-0677">Repeat</keyword>
<keyword id="KW-0964">Secreted</keyword>
<keyword id="KW-0732">Signal</keyword>
<keyword id="KW-0812">Transmembrane</keyword>
<keyword id="KW-1133">Transmembrane helix</keyword>
<accession>P01832</accession>
<organism>
    <name type="scientific">Oryctolagus cuniculus</name>
    <name type="common">Rabbit</name>
    <dbReference type="NCBI Taxonomy" id="9986"/>
    <lineage>
        <taxon>Eukaryota</taxon>
        <taxon>Metazoa</taxon>
        <taxon>Chordata</taxon>
        <taxon>Craniata</taxon>
        <taxon>Vertebrata</taxon>
        <taxon>Euteleostomi</taxon>
        <taxon>Mammalia</taxon>
        <taxon>Eutheria</taxon>
        <taxon>Euarchontoglires</taxon>
        <taxon>Glires</taxon>
        <taxon>Lagomorpha</taxon>
        <taxon>Leporidae</taxon>
        <taxon>Oryctolagus</taxon>
    </lineage>
</organism>
<comment type="function">
    <molecule>Polymeric immunoglobulin receptor</molecule>
    <text evidence="2">Mediates selective transcytosis of polymeric IgA and IgM across mucosal epithelial cells. Binds polymeric IgA and IgM at the basolateral surface of epithelial cells. The complex is then transported across the cell to be secreted at the apical surface. During this process, a cleavage occurs that separates the extracellular (known as the secretory component) from the transmembrane segment.</text>
</comment>
<comment type="function">
    <molecule>Secretory component</molecule>
    <text evidence="2">Through its N-linked glycans ensures anchoring of secretory IgA (sIgA) molecules to mucus lining the epithelial surface to neutralize extracellular pathogens. On its own (free form) may act as a non-specific microbial scavenger to prevent pathogen interaction with epithelial cells.</text>
</comment>
<comment type="subunit">
    <text evidence="2">Interacts (mainly via CDR1-like domain) with dimeric IgA. Interacts (mainly via CDR2-like domain) with pentameric IgM.</text>
</comment>
<comment type="subunit">
    <molecule>Secretory component</molecule>
    <text evidence="2">Either free or part of the secretory IgA (sIgA) complex that consists of two, four or five IgA monomers, and two additional non-Ig polypeptides, namely the JCHAIN and the secretory component (the proteolytic product of PIGR). Free secretory component interacts with bacterial antigens toxA of C.difficile and eae of E.coli.</text>
</comment>
<comment type="subcellular location">
    <molecule>Polymeric immunoglobulin receptor</molecule>
    <subcellularLocation>
        <location evidence="2">Cell membrane</location>
        <topology evidence="4">Single-pass type I membrane protein</topology>
    </subcellularLocation>
</comment>
<comment type="subcellular location">
    <molecule>Secretory component</molecule>
    <subcellularLocation>
        <location evidence="2">Secreted</location>
    </subcellularLocation>
</comment>
<comment type="domain">
    <text evidence="2">The Ig-like V-type 1/D1 domain contains three complementarity determining region-like loops CDR1-3, which mediate interaction with IgA and IgM.</text>
</comment>
<comment type="PTM">
    <text evidence="2">N-glycosylated. N-glycosylation is required for anchoring IgA molecules to mucus, but is not necessary for Ig binding.</text>
</comment>
<comment type="polymorphism">
    <text evidence="7">Three allotypes are known: allotype T61, allotype T62 and allotype T63. The sequence shown is that of allotype T62.</text>
</comment>
<proteinExistence type="evidence at protein level"/>
<feature type="signal peptide">
    <location>
        <begin position="1"/>
        <end position="18"/>
    </location>
</feature>
<feature type="chain" id="PRO_0000014904" description="Polymeric immunoglobulin receptor">
    <location>
        <begin position="19"/>
        <end position="773"/>
    </location>
</feature>
<feature type="chain" id="PRO_0000014905" description="Secretory component">
    <location>
        <begin position="19"/>
        <end position="615"/>
    </location>
</feature>
<feature type="topological domain" description="Extracellular" evidence="4">
    <location>
        <begin position="19"/>
        <end position="647"/>
    </location>
</feature>
<feature type="transmembrane region" description="Helical" evidence="4">
    <location>
        <begin position="648"/>
        <end position="670"/>
    </location>
</feature>
<feature type="topological domain" description="Cytoplasmic" evidence="4">
    <location>
        <begin position="671"/>
        <end position="773"/>
    </location>
</feature>
<feature type="domain" description="Ig-like V-type 1; required for binding to polymeric IgA and IgM" evidence="2">
    <location>
        <begin position="25"/>
        <end position="131"/>
    </location>
</feature>
<feature type="domain" description="Ig-like V-type 2">
    <location>
        <begin position="138"/>
        <end position="232"/>
    </location>
</feature>
<feature type="domain" description="Ig-like V-type 3">
    <location>
        <begin position="233"/>
        <end position="340"/>
    </location>
</feature>
<feature type="domain" description="Ig-like V-type 4">
    <location>
        <begin position="352"/>
        <end position="455"/>
    </location>
</feature>
<feature type="domain" description="Ig-like V-type 5">
    <location>
        <begin position="461"/>
        <end position="557"/>
    </location>
</feature>
<feature type="region of interest" description="Disordered" evidence="6">
    <location>
        <begin position="619"/>
        <end position="641"/>
    </location>
</feature>
<feature type="region of interest" description="Disordered" evidence="6">
    <location>
        <begin position="725"/>
        <end position="746"/>
    </location>
</feature>
<feature type="compositionally biased region" description="Low complexity" evidence="6">
    <location>
        <begin position="632"/>
        <end position="641"/>
    </location>
</feature>
<feature type="compositionally biased region" description="Basic and acidic residues" evidence="6">
    <location>
        <begin position="735"/>
        <end position="746"/>
    </location>
</feature>
<feature type="modified residue" description="Phosphoserine" evidence="3">
    <location>
        <position position="682"/>
    </location>
</feature>
<feature type="modified residue" description="Phosphoserine" evidence="1">
    <location>
        <position position="691"/>
    </location>
</feature>
<feature type="modified residue" description="Phosphoserine" evidence="3">
    <location>
        <position position="698"/>
    </location>
</feature>
<feature type="modified residue" description="Phosphoserine" evidence="1">
    <location>
        <position position="744"/>
    </location>
</feature>
<feature type="glycosylation site" description="N-linked (GlcNAc...) asparagine; in variant N-88" evidence="7">
    <location>
        <position position="88"/>
    </location>
</feature>
<feature type="glycosylation site" description="N-linked (GlcNAc...) asparagine" evidence="7">
    <location>
        <position position="108"/>
    </location>
</feature>
<feature type="glycosylation site" description="N-linked (GlcNAc...) asparagine" evidence="7">
    <location>
        <position position="418"/>
    </location>
</feature>
<feature type="disulfide bond" evidence="5">
    <location>
        <begin position="46"/>
        <end position="115"/>
    </location>
</feature>
<feature type="disulfide bond" evidence="5">
    <location>
        <begin position="155"/>
        <end position="225"/>
    </location>
</feature>
<feature type="disulfide bond" evidence="5">
    <location>
        <begin position="260"/>
        <end position="324"/>
    </location>
</feature>
<feature type="disulfide bond" evidence="5">
    <location>
        <begin position="369"/>
        <end position="438"/>
    </location>
</feature>
<feature type="disulfide bond" evidence="5">
    <location>
        <begin position="478"/>
        <end position="538"/>
    </location>
</feature>
<feature type="sequence variant" description="In allotype T61.">
    <original>K</original>
    <variation>N</variation>
    <location>
        <position position="88"/>
    </location>
</feature>
<feature type="sequence variant" description="In allotype T61.">
    <original>D</original>
    <variation>E</variation>
    <location>
        <position position="94"/>
    </location>
</feature>
<feature type="sequence variant" description="In allotype T61.">
    <original>TVDQLTQN</original>
    <variation>YLNRLSQS</variation>
    <location>
        <begin position="101"/>
        <end position="108"/>
    </location>
</feature>
<feature type="sequence variant" description="In allotype T63.">
    <original>S</original>
    <variation>T</variation>
    <location>
        <position position="110"/>
    </location>
</feature>